<gene>
    <name evidence="1" type="primary">atpA</name>
    <name type="ordered locus">ESA_04008</name>
</gene>
<name>ATPA_CROS8</name>
<accession>A7MMX1</accession>
<sequence>MQLNSTEISELIKQRIAQFNVVSEAHNEGTIVSVSDGVIRIHGLADCMQGEMISLPGNRYAIALNLERDSVGAVVMGPYADLAEGMKVKCTGRILEVPVGRGLLGRVVNTLGAPIDGKGPVEHDGFSPIEVIAPGVIDRQSVDQPVQTGYKSVDAMIPIGRGQRELIIGDRQTGKTAMAIDAIINQRDSGIKCVYVAIGQKASTIANVVRKLEEHGALSNTIVVVATASESAALQYLAPYAGCAMGEYFRDRGEDALIVYDDLSKQAVAYRQVSLLLRRPPGREAFPGDVFYLHSRLLERASRVNAEYVENFTKGAVKGKTGSLTALPIIETQAGDVSAFVPTNVISITDGQIFLETNLFNSGIRPAVNPGISVSRVGGAAQTKIIKKLSGGIRTALAQYRELAAFSQFASDLDEATRKQLSHGQKVTELLKQKQYAPMSVAQQGLVLFAAERGYLEDVELAKIGSFEAALLAYADRDHAPLMQEINQTGGYNDEIEGKLKSLLDSFKATQSW</sequence>
<reference key="1">
    <citation type="journal article" date="2010" name="PLoS ONE">
        <title>Genome sequence of Cronobacter sakazakii BAA-894 and comparative genomic hybridization analysis with other Cronobacter species.</title>
        <authorList>
            <person name="Kucerova E."/>
            <person name="Clifton S.W."/>
            <person name="Xia X.Q."/>
            <person name="Long F."/>
            <person name="Porwollik S."/>
            <person name="Fulton L."/>
            <person name="Fronick C."/>
            <person name="Minx P."/>
            <person name="Kyung K."/>
            <person name="Warren W."/>
            <person name="Fulton R."/>
            <person name="Feng D."/>
            <person name="Wollam A."/>
            <person name="Shah N."/>
            <person name="Bhonagiri V."/>
            <person name="Nash W.E."/>
            <person name="Hallsworth-Pepin K."/>
            <person name="Wilson R.K."/>
            <person name="McClelland M."/>
            <person name="Forsythe S.J."/>
        </authorList>
    </citation>
    <scope>NUCLEOTIDE SEQUENCE [LARGE SCALE GENOMIC DNA]</scope>
    <source>
        <strain>ATCC BAA-894</strain>
    </source>
</reference>
<keyword id="KW-0066">ATP synthesis</keyword>
<keyword id="KW-0067">ATP-binding</keyword>
<keyword id="KW-0997">Cell inner membrane</keyword>
<keyword id="KW-1003">Cell membrane</keyword>
<keyword id="KW-0139">CF(1)</keyword>
<keyword id="KW-0375">Hydrogen ion transport</keyword>
<keyword id="KW-0406">Ion transport</keyword>
<keyword id="KW-0472">Membrane</keyword>
<keyword id="KW-0547">Nucleotide-binding</keyword>
<keyword id="KW-1185">Reference proteome</keyword>
<keyword id="KW-1278">Translocase</keyword>
<keyword id="KW-0813">Transport</keyword>
<dbReference type="EC" id="7.1.2.2" evidence="1"/>
<dbReference type="EMBL" id="CP000783">
    <property type="protein sequence ID" value="ABU79194.1"/>
    <property type="molecule type" value="Genomic_DNA"/>
</dbReference>
<dbReference type="RefSeq" id="WP_004386169.1">
    <property type="nucleotide sequence ID" value="NC_009778.1"/>
</dbReference>
<dbReference type="SMR" id="A7MMX1"/>
<dbReference type="GeneID" id="56732648"/>
<dbReference type="KEGG" id="esa:ESA_04008"/>
<dbReference type="HOGENOM" id="CLU_010091_2_1_6"/>
<dbReference type="Proteomes" id="UP000000260">
    <property type="component" value="Chromosome"/>
</dbReference>
<dbReference type="GO" id="GO:0005886">
    <property type="term" value="C:plasma membrane"/>
    <property type="evidence" value="ECO:0007669"/>
    <property type="project" value="UniProtKB-SubCell"/>
</dbReference>
<dbReference type="GO" id="GO:0045259">
    <property type="term" value="C:proton-transporting ATP synthase complex"/>
    <property type="evidence" value="ECO:0007669"/>
    <property type="project" value="UniProtKB-KW"/>
</dbReference>
<dbReference type="GO" id="GO:0043531">
    <property type="term" value="F:ADP binding"/>
    <property type="evidence" value="ECO:0007669"/>
    <property type="project" value="TreeGrafter"/>
</dbReference>
<dbReference type="GO" id="GO:0005524">
    <property type="term" value="F:ATP binding"/>
    <property type="evidence" value="ECO:0007669"/>
    <property type="project" value="UniProtKB-UniRule"/>
</dbReference>
<dbReference type="GO" id="GO:0046933">
    <property type="term" value="F:proton-transporting ATP synthase activity, rotational mechanism"/>
    <property type="evidence" value="ECO:0007669"/>
    <property type="project" value="UniProtKB-UniRule"/>
</dbReference>
<dbReference type="CDD" id="cd18113">
    <property type="entry name" value="ATP-synt_F1_alpha_C"/>
    <property type="match status" value="1"/>
</dbReference>
<dbReference type="CDD" id="cd18116">
    <property type="entry name" value="ATP-synt_F1_alpha_N"/>
    <property type="match status" value="1"/>
</dbReference>
<dbReference type="CDD" id="cd01132">
    <property type="entry name" value="F1-ATPase_alpha_CD"/>
    <property type="match status" value="1"/>
</dbReference>
<dbReference type="FunFam" id="1.20.150.20:FF:000001">
    <property type="entry name" value="ATP synthase subunit alpha"/>
    <property type="match status" value="1"/>
</dbReference>
<dbReference type="FunFam" id="2.40.30.20:FF:000001">
    <property type="entry name" value="ATP synthase subunit alpha"/>
    <property type="match status" value="1"/>
</dbReference>
<dbReference type="FunFam" id="3.40.50.300:FF:000002">
    <property type="entry name" value="ATP synthase subunit alpha"/>
    <property type="match status" value="1"/>
</dbReference>
<dbReference type="Gene3D" id="2.40.30.20">
    <property type="match status" value="1"/>
</dbReference>
<dbReference type="Gene3D" id="1.20.150.20">
    <property type="entry name" value="ATP synthase alpha/beta chain, C-terminal domain"/>
    <property type="match status" value="1"/>
</dbReference>
<dbReference type="Gene3D" id="3.40.50.300">
    <property type="entry name" value="P-loop containing nucleotide triphosphate hydrolases"/>
    <property type="match status" value="1"/>
</dbReference>
<dbReference type="HAMAP" id="MF_01346">
    <property type="entry name" value="ATP_synth_alpha_bact"/>
    <property type="match status" value="1"/>
</dbReference>
<dbReference type="InterPro" id="IPR023366">
    <property type="entry name" value="ATP_synth_asu-like_sf"/>
</dbReference>
<dbReference type="InterPro" id="IPR000793">
    <property type="entry name" value="ATP_synth_asu_C"/>
</dbReference>
<dbReference type="InterPro" id="IPR038376">
    <property type="entry name" value="ATP_synth_asu_C_sf"/>
</dbReference>
<dbReference type="InterPro" id="IPR033732">
    <property type="entry name" value="ATP_synth_F1_a_nt-bd_dom"/>
</dbReference>
<dbReference type="InterPro" id="IPR005294">
    <property type="entry name" value="ATP_synth_F1_asu"/>
</dbReference>
<dbReference type="InterPro" id="IPR020003">
    <property type="entry name" value="ATPase_a/bsu_AS"/>
</dbReference>
<dbReference type="InterPro" id="IPR004100">
    <property type="entry name" value="ATPase_F1/V1/A1_a/bsu_N"/>
</dbReference>
<dbReference type="InterPro" id="IPR036121">
    <property type="entry name" value="ATPase_F1/V1/A1_a/bsu_N_sf"/>
</dbReference>
<dbReference type="InterPro" id="IPR000194">
    <property type="entry name" value="ATPase_F1/V1/A1_a/bsu_nucl-bd"/>
</dbReference>
<dbReference type="InterPro" id="IPR027417">
    <property type="entry name" value="P-loop_NTPase"/>
</dbReference>
<dbReference type="NCBIfam" id="TIGR00962">
    <property type="entry name" value="atpA"/>
    <property type="match status" value="1"/>
</dbReference>
<dbReference type="NCBIfam" id="NF009884">
    <property type="entry name" value="PRK13343.1"/>
    <property type="match status" value="1"/>
</dbReference>
<dbReference type="PANTHER" id="PTHR48082">
    <property type="entry name" value="ATP SYNTHASE SUBUNIT ALPHA, MITOCHONDRIAL"/>
    <property type="match status" value="1"/>
</dbReference>
<dbReference type="PANTHER" id="PTHR48082:SF2">
    <property type="entry name" value="ATP SYNTHASE SUBUNIT ALPHA, MITOCHONDRIAL"/>
    <property type="match status" value="1"/>
</dbReference>
<dbReference type="Pfam" id="PF00006">
    <property type="entry name" value="ATP-synt_ab"/>
    <property type="match status" value="1"/>
</dbReference>
<dbReference type="Pfam" id="PF00306">
    <property type="entry name" value="ATP-synt_ab_C"/>
    <property type="match status" value="1"/>
</dbReference>
<dbReference type="Pfam" id="PF02874">
    <property type="entry name" value="ATP-synt_ab_N"/>
    <property type="match status" value="1"/>
</dbReference>
<dbReference type="SUPFAM" id="SSF47917">
    <property type="entry name" value="C-terminal domain of alpha and beta subunits of F1 ATP synthase"/>
    <property type="match status" value="1"/>
</dbReference>
<dbReference type="SUPFAM" id="SSF50615">
    <property type="entry name" value="N-terminal domain of alpha and beta subunits of F1 ATP synthase"/>
    <property type="match status" value="1"/>
</dbReference>
<dbReference type="SUPFAM" id="SSF52540">
    <property type="entry name" value="P-loop containing nucleoside triphosphate hydrolases"/>
    <property type="match status" value="1"/>
</dbReference>
<dbReference type="PROSITE" id="PS00152">
    <property type="entry name" value="ATPASE_ALPHA_BETA"/>
    <property type="match status" value="1"/>
</dbReference>
<feature type="chain" id="PRO_1000055065" description="ATP synthase subunit alpha">
    <location>
        <begin position="1"/>
        <end position="513"/>
    </location>
</feature>
<feature type="binding site" evidence="1">
    <location>
        <begin position="169"/>
        <end position="176"/>
    </location>
    <ligand>
        <name>ATP</name>
        <dbReference type="ChEBI" id="CHEBI:30616"/>
    </ligand>
</feature>
<feature type="site" description="Required for activity" evidence="1">
    <location>
        <position position="373"/>
    </location>
</feature>
<evidence type="ECO:0000255" key="1">
    <source>
        <dbReference type="HAMAP-Rule" id="MF_01346"/>
    </source>
</evidence>
<protein>
    <recommendedName>
        <fullName evidence="1">ATP synthase subunit alpha</fullName>
        <ecNumber evidence="1">7.1.2.2</ecNumber>
    </recommendedName>
    <alternativeName>
        <fullName evidence="1">ATP synthase F1 sector subunit alpha</fullName>
    </alternativeName>
    <alternativeName>
        <fullName evidence="1">F-ATPase subunit alpha</fullName>
    </alternativeName>
</protein>
<organism>
    <name type="scientific">Cronobacter sakazakii (strain ATCC BAA-894)</name>
    <name type="common">Enterobacter sakazakii</name>
    <dbReference type="NCBI Taxonomy" id="290339"/>
    <lineage>
        <taxon>Bacteria</taxon>
        <taxon>Pseudomonadati</taxon>
        <taxon>Pseudomonadota</taxon>
        <taxon>Gammaproteobacteria</taxon>
        <taxon>Enterobacterales</taxon>
        <taxon>Enterobacteriaceae</taxon>
        <taxon>Cronobacter</taxon>
    </lineage>
</organism>
<proteinExistence type="inferred from homology"/>
<comment type="function">
    <text evidence="1">Produces ATP from ADP in the presence of a proton gradient across the membrane. The alpha chain is a regulatory subunit.</text>
</comment>
<comment type="catalytic activity">
    <reaction evidence="1">
        <text>ATP + H2O + 4 H(+)(in) = ADP + phosphate + 5 H(+)(out)</text>
        <dbReference type="Rhea" id="RHEA:57720"/>
        <dbReference type="ChEBI" id="CHEBI:15377"/>
        <dbReference type="ChEBI" id="CHEBI:15378"/>
        <dbReference type="ChEBI" id="CHEBI:30616"/>
        <dbReference type="ChEBI" id="CHEBI:43474"/>
        <dbReference type="ChEBI" id="CHEBI:456216"/>
        <dbReference type="EC" id="7.1.2.2"/>
    </reaction>
</comment>
<comment type="subunit">
    <text evidence="1">F-type ATPases have 2 components, CF(1) - the catalytic core - and CF(0) - the membrane proton channel. CF(1) has five subunits: alpha(3), beta(3), gamma(1), delta(1), epsilon(1). CF(0) has three main subunits: a(1), b(2) and c(9-12). The alpha and beta chains form an alternating ring which encloses part of the gamma chain. CF(1) is attached to CF(0) by a central stalk formed by the gamma and epsilon chains, while a peripheral stalk is formed by the delta and b chains.</text>
</comment>
<comment type="subcellular location">
    <subcellularLocation>
        <location evidence="1">Cell inner membrane</location>
        <topology evidence="1">Peripheral membrane protein</topology>
    </subcellularLocation>
</comment>
<comment type="similarity">
    <text evidence="1">Belongs to the ATPase alpha/beta chains family.</text>
</comment>